<proteinExistence type="inferred from homology"/>
<name>Y1466_BACP2</name>
<protein>
    <recommendedName>
        <fullName evidence="1">Putative regulatory protein BPUM_1466</fullName>
    </recommendedName>
</protein>
<comment type="similarity">
    <text evidence="1">Belongs to the RemA family.</text>
</comment>
<feature type="chain" id="PRO_1000068580" description="Putative regulatory protein BPUM_1466">
    <location>
        <begin position="1"/>
        <end position="89"/>
    </location>
</feature>
<gene>
    <name type="ordered locus">BPUM_1466</name>
</gene>
<sequence>MTIKLINIGFGNIISANRMISIVSPESAPIKRMIQDARDRGMLIDATYGRRTRAVVIMDSDHVILSAVQPETVAQRLSVKEEIIDEGQG</sequence>
<organism>
    <name type="scientific">Bacillus pumilus (strain SAFR-032)</name>
    <dbReference type="NCBI Taxonomy" id="315750"/>
    <lineage>
        <taxon>Bacteria</taxon>
        <taxon>Bacillati</taxon>
        <taxon>Bacillota</taxon>
        <taxon>Bacilli</taxon>
        <taxon>Bacillales</taxon>
        <taxon>Bacillaceae</taxon>
        <taxon>Bacillus</taxon>
    </lineage>
</organism>
<evidence type="ECO:0000255" key="1">
    <source>
        <dbReference type="HAMAP-Rule" id="MF_01503"/>
    </source>
</evidence>
<accession>A8FD32</accession>
<reference key="1">
    <citation type="journal article" date="2007" name="PLoS ONE">
        <title>Paradoxical DNA repair and peroxide resistance gene conservation in Bacillus pumilus SAFR-032.</title>
        <authorList>
            <person name="Gioia J."/>
            <person name="Yerrapragada S."/>
            <person name="Qin X."/>
            <person name="Jiang H."/>
            <person name="Igboeli O.C."/>
            <person name="Muzny D."/>
            <person name="Dugan-Rocha S."/>
            <person name="Ding Y."/>
            <person name="Hawes A."/>
            <person name="Liu W."/>
            <person name="Perez L."/>
            <person name="Kovar C."/>
            <person name="Dinh H."/>
            <person name="Lee S."/>
            <person name="Nazareth L."/>
            <person name="Blyth P."/>
            <person name="Holder M."/>
            <person name="Buhay C."/>
            <person name="Tirumalai M.R."/>
            <person name="Liu Y."/>
            <person name="Dasgupta I."/>
            <person name="Bokhetache L."/>
            <person name="Fujita M."/>
            <person name="Karouia F."/>
            <person name="Eswara Moorthy P."/>
            <person name="Siefert J."/>
            <person name="Uzman A."/>
            <person name="Buzumbo P."/>
            <person name="Verma A."/>
            <person name="Zwiya H."/>
            <person name="McWilliams B.D."/>
            <person name="Olowu A."/>
            <person name="Clinkenbeard K.D."/>
            <person name="Newcombe D."/>
            <person name="Golebiewski L."/>
            <person name="Petrosino J.F."/>
            <person name="Nicholson W.L."/>
            <person name="Fox G.E."/>
            <person name="Venkateswaran K."/>
            <person name="Highlander S.K."/>
            <person name="Weinstock G.M."/>
        </authorList>
    </citation>
    <scope>NUCLEOTIDE SEQUENCE [LARGE SCALE GENOMIC DNA]</scope>
    <source>
        <strain>SAFR-032</strain>
    </source>
</reference>
<dbReference type="EMBL" id="CP000813">
    <property type="protein sequence ID" value="ABV62149.1"/>
    <property type="molecule type" value="Genomic_DNA"/>
</dbReference>
<dbReference type="SMR" id="A8FD32"/>
<dbReference type="STRING" id="315750.BPUM_1466"/>
<dbReference type="KEGG" id="bpu:BPUM_1466"/>
<dbReference type="eggNOG" id="COG2052">
    <property type="taxonomic scope" value="Bacteria"/>
</dbReference>
<dbReference type="HOGENOM" id="CLU_165326_0_0_9"/>
<dbReference type="OrthoDB" id="5432174at2"/>
<dbReference type="Proteomes" id="UP000001355">
    <property type="component" value="Chromosome"/>
</dbReference>
<dbReference type="HAMAP" id="MF_01503">
    <property type="entry name" value="RemA"/>
    <property type="match status" value="1"/>
</dbReference>
<dbReference type="InterPro" id="IPR007169">
    <property type="entry name" value="RemA-like"/>
</dbReference>
<dbReference type="NCBIfam" id="NF046064">
    <property type="entry name" value="MtxBflmRegRemA"/>
    <property type="match status" value="1"/>
</dbReference>
<dbReference type="NCBIfam" id="NF003315">
    <property type="entry name" value="PRK04323.1"/>
    <property type="match status" value="1"/>
</dbReference>
<dbReference type="PANTHER" id="PTHR38449:SF1">
    <property type="entry name" value="REGULATORY PROTEIN SSL2874-RELATED"/>
    <property type="match status" value="1"/>
</dbReference>
<dbReference type="PANTHER" id="PTHR38449">
    <property type="entry name" value="REGULATORY PROTEIN TM_1690-RELATED"/>
    <property type="match status" value="1"/>
</dbReference>
<dbReference type="Pfam" id="PF04025">
    <property type="entry name" value="RemA-like"/>
    <property type="match status" value="1"/>
</dbReference>